<keyword id="KW-0378">Hydrolase</keyword>
<keyword id="KW-0479">Metal-binding</keyword>
<keyword id="KW-0482">Metalloprotease</keyword>
<keyword id="KW-0645">Protease</keyword>
<keyword id="KW-1185">Reference proteome</keyword>
<keyword id="KW-0862">Zinc</keyword>
<organism>
    <name type="scientific">Coprothermobacter proteolyticus (strain ATCC 35245 / DSM 5265 / OCM 4 / BT)</name>
    <dbReference type="NCBI Taxonomy" id="309798"/>
    <lineage>
        <taxon>Bacteria</taxon>
        <taxon>Pseudomonadati</taxon>
        <taxon>Coprothermobacterota</taxon>
        <taxon>Coprothermobacteria</taxon>
        <taxon>Coprothermobacterales</taxon>
        <taxon>Coprothermobacteraceae</taxon>
        <taxon>Coprothermobacter</taxon>
    </lineage>
</organism>
<reference key="1">
    <citation type="submission" date="2008-08" db="EMBL/GenBank/DDBJ databases">
        <title>The complete genome sequence of Coprothermobacter proteolyticus strain ATCC 5245 / DSM 5265 / BT.</title>
        <authorList>
            <person name="Dodson R.J."/>
            <person name="Durkin A.S."/>
            <person name="Wu M."/>
            <person name="Eisen J."/>
            <person name="Sutton G."/>
        </authorList>
    </citation>
    <scope>NUCLEOTIDE SEQUENCE [LARGE SCALE GENOMIC DNA]</scope>
    <source>
        <strain>ATCC 35245 / DSM 5265 / OCM 4 / BT</strain>
    </source>
</reference>
<evidence type="ECO:0000255" key="1">
    <source>
        <dbReference type="PROSITE-ProRule" id="PRU01182"/>
    </source>
</evidence>
<evidence type="ECO:0000305" key="2"/>
<gene>
    <name type="ordered locus">COPRO5265_1522</name>
</gene>
<sequence>MSNPNYKIPIKEWIVSERPRELLLSKGPEHLPDAKLLAIILRTGNKEETAEDLARRLLNTFGGFTGLYRASVEELLQIKGMGKAKAAQVKAALEIGKRFLQNETVEEARITTPEDAIEYAARYFSSMLMNEGKEHFWILLLDRKNRPIKHVEISVGSSIQTTVDPKEILKQVSLTSAQALILIHNHPSGDPSPSREDVAVTKQLKQACELVGAQLLDHIIVGKNQHVSLAREKLI</sequence>
<comment type="similarity">
    <text evidence="2">Belongs to the UPF0758 family.</text>
</comment>
<feature type="chain" id="PRO_1000089808" description="UPF0758 protein COPRO5265_1522">
    <location>
        <begin position="1"/>
        <end position="235"/>
    </location>
</feature>
<feature type="domain" description="MPN" evidence="1">
    <location>
        <begin position="109"/>
        <end position="235"/>
    </location>
</feature>
<feature type="short sequence motif" description="JAMM motif" evidence="1">
    <location>
        <begin position="184"/>
        <end position="197"/>
    </location>
</feature>
<feature type="binding site" evidence="1">
    <location>
        <position position="184"/>
    </location>
    <ligand>
        <name>Zn(2+)</name>
        <dbReference type="ChEBI" id="CHEBI:29105"/>
        <note>catalytic</note>
    </ligand>
</feature>
<feature type="binding site" evidence="1">
    <location>
        <position position="186"/>
    </location>
    <ligand>
        <name>Zn(2+)</name>
        <dbReference type="ChEBI" id="CHEBI:29105"/>
        <note>catalytic</note>
    </ligand>
</feature>
<feature type="binding site" evidence="1">
    <location>
        <position position="197"/>
    </location>
    <ligand>
        <name>Zn(2+)</name>
        <dbReference type="ChEBI" id="CHEBI:29105"/>
        <note>catalytic</note>
    </ligand>
</feature>
<proteinExistence type="inferred from homology"/>
<name>Y1522_COPPD</name>
<accession>B5Y6A0</accession>
<protein>
    <recommendedName>
        <fullName>UPF0758 protein COPRO5265_1522</fullName>
    </recommendedName>
</protein>
<dbReference type="EMBL" id="CP001145">
    <property type="protein sequence ID" value="ACI16914.1"/>
    <property type="molecule type" value="Genomic_DNA"/>
</dbReference>
<dbReference type="SMR" id="B5Y6A0"/>
<dbReference type="STRING" id="309798.COPRO5265_1522"/>
<dbReference type="KEGG" id="cpo:COPRO5265_1522"/>
<dbReference type="eggNOG" id="COG2003">
    <property type="taxonomic scope" value="Bacteria"/>
</dbReference>
<dbReference type="HOGENOM" id="CLU_073529_0_2_9"/>
<dbReference type="OrthoDB" id="9804482at2"/>
<dbReference type="Proteomes" id="UP000001732">
    <property type="component" value="Chromosome"/>
</dbReference>
<dbReference type="GO" id="GO:0046872">
    <property type="term" value="F:metal ion binding"/>
    <property type="evidence" value="ECO:0007669"/>
    <property type="project" value="UniProtKB-KW"/>
</dbReference>
<dbReference type="GO" id="GO:0008237">
    <property type="term" value="F:metallopeptidase activity"/>
    <property type="evidence" value="ECO:0007669"/>
    <property type="project" value="UniProtKB-KW"/>
</dbReference>
<dbReference type="GO" id="GO:0006508">
    <property type="term" value="P:proteolysis"/>
    <property type="evidence" value="ECO:0007669"/>
    <property type="project" value="UniProtKB-KW"/>
</dbReference>
<dbReference type="CDD" id="cd08071">
    <property type="entry name" value="MPN_DUF2466"/>
    <property type="match status" value="1"/>
</dbReference>
<dbReference type="Gene3D" id="1.10.150.20">
    <property type="entry name" value="5' to 3' exonuclease, C-terminal subdomain"/>
    <property type="match status" value="1"/>
</dbReference>
<dbReference type="Gene3D" id="3.40.140.10">
    <property type="entry name" value="Cytidine Deaminase, domain 2"/>
    <property type="match status" value="1"/>
</dbReference>
<dbReference type="InterPro" id="IPR037518">
    <property type="entry name" value="MPN"/>
</dbReference>
<dbReference type="InterPro" id="IPR025657">
    <property type="entry name" value="RadC_JAB"/>
</dbReference>
<dbReference type="InterPro" id="IPR010994">
    <property type="entry name" value="RuvA_2-like"/>
</dbReference>
<dbReference type="InterPro" id="IPR001405">
    <property type="entry name" value="UPF0758"/>
</dbReference>
<dbReference type="InterPro" id="IPR020891">
    <property type="entry name" value="UPF0758_CS"/>
</dbReference>
<dbReference type="InterPro" id="IPR046778">
    <property type="entry name" value="UPF0758_N"/>
</dbReference>
<dbReference type="NCBIfam" id="NF000642">
    <property type="entry name" value="PRK00024.1"/>
    <property type="match status" value="1"/>
</dbReference>
<dbReference type="NCBIfam" id="TIGR00608">
    <property type="entry name" value="radc"/>
    <property type="match status" value="1"/>
</dbReference>
<dbReference type="PANTHER" id="PTHR30471">
    <property type="entry name" value="DNA REPAIR PROTEIN RADC"/>
    <property type="match status" value="1"/>
</dbReference>
<dbReference type="PANTHER" id="PTHR30471:SF3">
    <property type="entry name" value="UPF0758 PROTEIN YEES-RELATED"/>
    <property type="match status" value="1"/>
</dbReference>
<dbReference type="Pfam" id="PF04002">
    <property type="entry name" value="RadC"/>
    <property type="match status" value="1"/>
</dbReference>
<dbReference type="Pfam" id="PF20582">
    <property type="entry name" value="UPF0758_N"/>
    <property type="match status" value="1"/>
</dbReference>
<dbReference type="SUPFAM" id="SSF47781">
    <property type="entry name" value="RuvA domain 2-like"/>
    <property type="match status" value="1"/>
</dbReference>
<dbReference type="PROSITE" id="PS50249">
    <property type="entry name" value="MPN"/>
    <property type="match status" value="1"/>
</dbReference>
<dbReference type="PROSITE" id="PS01302">
    <property type="entry name" value="UPF0758"/>
    <property type="match status" value="1"/>
</dbReference>